<accession>Q9HVX6</accession>
<organism>
    <name type="scientific">Pseudomonas aeruginosa (strain ATCC 15692 / DSM 22644 / CIP 104116 / JCM 14847 / LMG 12228 / 1C / PRS 101 / PAO1)</name>
    <dbReference type="NCBI Taxonomy" id="208964"/>
    <lineage>
        <taxon>Bacteria</taxon>
        <taxon>Pseudomonadati</taxon>
        <taxon>Pseudomonadota</taxon>
        <taxon>Gammaproteobacteria</taxon>
        <taxon>Pseudomonadales</taxon>
        <taxon>Pseudomonadaceae</taxon>
        <taxon>Pseudomonas</taxon>
    </lineage>
</organism>
<proteinExistence type="inferred from homology"/>
<gene>
    <name evidence="1" type="primary">trpS</name>
    <name type="ordered locus">PA4439</name>
</gene>
<name>SYW_PSEAE</name>
<evidence type="ECO:0000255" key="1">
    <source>
        <dbReference type="HAMAP-Rule" id="MF_00140"/>
    </source>
</evidence>
<comment type="function">
    <text evidence="1">Catalyzes the attachment of tryptophan to tRNA(Trp).</text>
</comment>
<comment type="catalytic activity">
    <reaction evidence="1">
        <text>tRNA(Trp) + L-tryptophan + ATP = L-tryptophyl-tRNA(Trp) + AMP + diphosphate + H(+)</text>
        <dbReference type="Rhea" id="RHEA:24080"/>
        <dbReference type="Rhea" id="RHEA-COMP:9671"/>
        <dbReference type="Rhea" id="RHEA-COMP:9705"/>
        <dbReference type="ChEBI" id="CHEBI:15378"/>
        <dbReference type="ChEBI" id="CHEBI:30616"/>
        <dbReference type="ChEBI" id="CHEBI:33019"/>
        <dbReference type="ChEBI" id="CHEBI:57912"/>
        <dbReference type="ChEBI" id="CHEBI:78442"/>
        <dbReference type="ChEBI" id="CHEBI:78535"/>
        <dbReference type="ChEBI" id="CHEBI:456215"/>
        <dbReference type="EC" id="6.1.1.2"/>
    </reaction>
</comment>
<comment type="subunit">
    <text evidence="1">Homodimer.</text>
</comment>
<comment type="subcellular location">
    <subcellularLocation>
        <location evidence="1">Cytoplasm</location>
    </subcellularLocation>
</comment>
<comment type="similarity">
    <text evidence="1">Belongs to the class-I aminoacyl-tRNA synthetase family.</text>
</comment>
<reference key="1">
    <citation type="journal article" date="2000" name="Nature">
        <title>Complete genome sequence of Pseudomonas aeruginosa PAO1, an opportunistic pathogen.</title>
        <authorList>
            <person name="Stover C.K."/>
            <person name="Pham X.-Q.T."/>
            <person name="Erwin A.L."/>
            <person name="Mizoguchi S.D."/>
            <person name="Warrener P."/>
            <person name="Hickey M.J."/>
            <person name="Brinkman F.S.L."/>
            <person name="Hufnagle W.O."/>
            <person name="Kowalik D.J."/>
            <person name="Lagrou M."/>
            <person name="Garber R.L."/>
            <person name="Goltry L."/>
            <person name="Tolentino E."/>
            <person name="Westbrock-Wadman S."/>
            <person name="Yuan Y."/>
            <person name="Brody L.L."/>
            <person name="Coulter S.N."/>
            <person name="Folger K.R."/>
            <person name="Kas A."/>
            <person name="Larbig K."/>
            <person name="Lim R.M."/>
            <person name="Smith K.A."/>
            <person name="Spencer D.H."/>
            <person name="Wong G.K.-S."/>
            <person name="Wu Z."/>
            <person name="Paulsen I.T."/>
            <person name="Reizer J."/>
            <person name="Saier M.H. Jr."/>
            <person name="Hancock R.E.W."/>
            <person name="Lory S."/>
            <person name="Olson M.V."/>
        </authorList>
    </citation>
    <scope>NUCLEOTIDE SEQUENCE [LARGE SCALE GENOMIC DNA]</scope>
    <source>
        <strain>ATCC 15692 / DSM 22644 / CIP 104116 / JCM 14847 / LMG 12228 / 1C / PRS 101 / PAO1</strain>
    </source>
</reference>
<dbReference type="EC" id="6.1.1.2" evidence="1"/>
<dbReference type="EMBL" id="AE004091">
    <property type="protein sequence ID" value="AAG07827.1"/>
    <property type="molecule type" value="Genomic_DNA"/>
</dbReference>
<dbReference type="PIR" id="A83091">
    <property type="entry name" value="A83091"/>
</dbReference>
<dbReference type="RefSeq" id="NP_253129.1">
    <property type="nucleotide sequence ID" value="NC_002516.2"/>
</dbReference>
<dbReference type="RefSeq" id="WP_003112748.1">
    <property type="nucleotide sequence ID" value="NZ_QZGE01000004.1"/>
</dbReference>
<dbReference type="SMR" id="Q9HVX6"/>
<dbReference type="FunCoup" id="Q9HVX6">
    <property type="interactions" value="627"/>
</dbReference>
<dbReference type="STRING" id="208964.PA4439"/>
<dbReference type="PaxDb" id="208964-PA4439"/>
<dbReference type="GeneID" id="880958"/>
<dbReference type="KEGG" id="pae:PA4439"/>
<dbReference type="PATRIC" id="fig|208964.12.peg.4648"/>
<dbReference type="PseudoCAP" id="PA4439"/>
<dbReference type="HOGENOM" id="CLU_029244_5_1_6"/>
<dbReference type="InParanoid" id="Q9HVX6"/>
<dbReference type="OrthoDB" id="9801042at2"/>
<dbReference type="PhylomeDB" id="Q9HVX6"/>
<dbReference type="BioCyc" id="PAER208964:G1FZ6-4527-MONOMER"/>
<dbReference type="Proteomes" id="UP000002438">
    <property type="component" value="Chromosome"/>
</dbReference>
<dbReference type="GO" id="GO:0005829">
    <property type="term" value="C:cytosol"/>
    <property type="evidence" value="ECO:0000318"/>
    <property type="project" value="GO_Central"/>
</dbReference>
<dbReference type="GO" id="GO:0005524">
    <property type="term" value="F:ATP binding"/>
    <property type="evidence" value="ECO:0007669"/>
    <property type="project" value="UniProtKB-UniRule"/>
</dbReference>
<dbReference type="GO" id="GO:0004830">
    <property type="term" value="F:tryptophan-tRNA ligase activity"/>
    <property type="evidence" value="ECO:0000318"/>
    <property type="project" value="GO_Central"/>
</dbReference>
<dbReference type="GO" id="GO:0006436">
    <property type="term" value="P:tryptophanyl-tRNA aminoacylation"/>
    <property type="evidence" value="ECO:0000318"/>
    <property type="project" value="GO_Central"/>
</dbReference>
<dbReference type="CDD" id="cd00806">
    <property type="entry name" value="TrpRS_core"/>
    <property type="match status" value="1"/>
</dbReference>
<dbReference type="FunFam" id="1.10.240.10:FF:000005">
    <property type="entry name" value="Tryptophan--tRNA ligase"/>
    <property type="match status" value="1"/>
</dbReference>
<dbReference type="FunFam" id="3.40.50.620:FF:000144">
    <property type="entry name" value="Tryptophan--tRNA ligase"/>
    <property type="match status" value="1"/>
</dbReference>
<dbReference type="Gene3D" id="3.40.50.620">
    <property type="entry name" value="HUPs"/>
    <property type="match status" value="1"/>
</dbReference>
<dbReference type="Gene3D" id="1.10.240.10">
    <property type="entry name" value="Tyrosyl-Transfer RNA Synthetase"/>
    <property type="match status" value="1"/>
</dbReference>
<dbReference type="HAMAP" id="MF_00140_B">
    <property type="entry name" value="Trp_tRNA_synth_B"/>
    <property type="match status" value="1"/>
</dbReference>
<dbReference type="InterPro" id="IPR001412">
    <property type="entry name" value="aa-tRNA-synth_I_CS"/>
</dbReference>
<dbReference type="InterPro" id="IPR002305">
    <property type="entry name" value="aa-tRNA-synth_Ic"/>
</dbReference>
<dbReference type="InterPro" id="IPR014729">
    <property type="entry name" value="Rossmann-like_a/b/a_fold"/>
</dbReference>
<dbReference type="InterPro" id="IPR002306">
    <property type="entry name" value="Trp-tRNA-ligase"/>
</dbReference>
<dbReference type="InterPro" id="IPR024109">
    <property type="entry name" value="Trp-tRNA-ligase_bac-type"/>
</dbReference>
<dbReference type="InterPro" id="IPR050203">
    <property type="entry name" value="Trp-tRNA_synthetase"/>
</dbReference>
<dbReference type="InterPro" id="IPR036913">
    <property type="entry name" value="YegP-like_sf"/>
</dbReference>
<dbReference type="NCBIfam" id="NF008923">
    <property type="entry name" value="PRK12284.1"/>
    <property type="match status" value="1"/>
</dbReference>
<dbReference type="NCBIfam" id="TIGR00233">
    <property type="entry name" value="trpS"/>
    <property type="match status" value="1"/>
</dbReference>
<dbReference type="PANTHER" id="PTHR43766">
    <property type="entry name" value="TRYPTOPHAN--TRNA LIGASE, MITOCHONDRIAL"/>
    <property type="match status" value="1"/>
</dbReference>
<dbReference type="PANTHER" id="PTHR43766:SF1">
    <property type="entry name" value="TRYPTOPHAN--TRNA LIGASE, MITOCHONDRIAL"/>
    <property type="match status" value="1"/>
</dbReference>
<dbReference type="Pfam" id="PF00579">
    <property type="entry name" value="tRNA-synt_1b"/>
    <property type="match status" value="1"/>
</dbReference>
<dbReference type="PRINTS" id="PR01039">
    <property type="entry name" value="TRNASYNTHTRP"/>
</dbReference>
<dbReference type="SUPFAM" id="SSF52374">
    <property type="entry name" value="Nucleotidylyl transferase"/>
    <property type="match status" value="1"/>
</dbReference>
<dbReference type="SUPFAM" id="SSF160113">
    <property type="entry name" value="YegP-like"/>
    <property type="match status" value="1"/>
</dbReference>
<dbReference type="PROSITE" id="PS00178">
    <property type="entry name" value="AA_TRNA_LIGASE_I"/>
    <property type="match status" value="1"/>
</dbReference>
<feature type="chain" id="PRO_0000136662" description="Tryptophan--tRNA ligase">
    <location>
        <begin position="1"/>
        <end position="448"/>
    </location>
</feature>
<feature type="short sequence motif" description="'HIGH' region" evidence="1">
    <location>
        <begin position="11"/>
        <end position="19"/>
    </location>
</feature>
<feature type="short sequence motif" description="'KMSKS' region" evidence="1">
    <location>
        <begin position="204"/>
        <end position="208"/>
    </location>
</feature>
<feature type="binding site" evidence="1">
    <location>
        <begin position="10"/>
        <end position="12"/>
    </location>
    <ligand>
        <name>ATP</name>
        <dbReference type="ChEBI" id="CHEBI:30616"/>
    </ligand>
</feature>
<feature type="binding site" evidence="1">
    <location>
        <begin position="18"/>
        <end position="19"/>
    </location>
    <ligand>
        <name>ATP</name>
        <dbReference type="ChEBI" id="CHEBI:30616"/>
    </ligand>
</feature>
<feature type="binding site" evidence="1">
    <location>
        <position position="143"/>
    </location>
    <ligand>
        <name>L-tryptophan</name>
        <dbReference type="ChEBI" id="CHEBI:57912"/>
    </ligand>
</feature>
<feature type="binding site" evidence="1">
    <location>
        <begin position="155"/>
        <end position="157"/>
    </location>
    <ligand>
        <name>ATP</name>
        <dbReference type="ChEBI" id="CHEBI:30616"/>
    </ligand>
</feature>
<feature type="binding site" evidence="1">
    <location>
        <position position="197"/>
    </location>
    <ligand>
        <name>ATP</name>
        <dbReference type="ChEBI" id="CHEBI:30616"/>
    </ligand>
</feature>
<feature type="binding site" evidence="1">
    <location>
        <begin position="204"/>
        <end position="208"/>
    </location>
    <ligand>
        <name>ATP</name>
        <dbReference type="ChEBI" id="CHEBI:30616"/>
    </ligand>
</feature>
<sequence>MTTRILTGITPTGTPHLGNYAGAIRPAILASRRSDVDSFYFLADYHALIKCDDPARIQRSRLEIAATWLAGGLDVERATFYRQSDIPEIPELTWLLTCVSAKGLLNRAHAYKAAVDRNVEAGEDPDAGVTMGLYSYPVLMAADILMFNAHKIPVGRDQVQHVEMARDIGQRFNHLFGNGREFFVLPEAVIEENVATLPGLDGRKMSKSYDNTIPLFSPSRQLKDAIARIVTDSRAPGEPKDPDSSHLFLLYSAFASAEQVAAFRQELLEGLAWGEAKQRLFQLLDNELGEARERYQALIAKPDDIEDILLAGAAKARRIATPFIAELREAVGLRSLREPLKSAESGKKKAAKAARLVSFRDDDGSFRFRLLDAAGEQLLLSRAFADGKAAGAVSKRLLAGETADLRAEGNAFGLWLDGEAVAQSPAFADAAARDAAIERTREALAPQE</sequence>
<keyword id="KW-0030">Aminoacyl-tRNA synthetase</keyword>
<keyword id="KW-0067">ATP-binding</keyword>
<keyword id="KW-0963">Cytoplasm</keyword>
<keyword id="KW-0436">Ligase</keyword>
<keyword id="KW-0547">Nucleotide-binding</keyword>
<keyword id="KW-0648">Protein biosynthesis</keyword>
<keyword id="KW-1185">Reference proteome</keyword>
<protein>
    <recommendedName>
        <fullName evidence="1">Tryptophan--tRNA ligase</fullName>
        <ecNumber evidence="1">6.1.1.2</ecNumber>
    </recommendedName>
    <alternativeName>
        <fullName evidence="1">Tryptophanyl-tRNA synthetase</fullName>
        <shortName evidence="1">TrpRS</shortName>
    </alternativeName>
</protein>